<comment type="catalytic activity">
    <reaction>
        <text>N-(5-phospho-beta-D-ribosyl)anthranilate = 1-(2-carboxyphenylamino)-1-deoxy-D-ribulose 5-phosphate</text>
        <dbReference type="Rhea" id="RHEA:21540"/>
        <dbReference type="ChEBI" id="CHEBI:18277"/>
        <dbReference type="ChEBI" id="CHEBI:58613"/>
        <dbReference type="EC" id="5.3.1.24"/>
    </reaction>
</comment>
<comment type="pathway">
    <text>Amino-acid biosynthesis; L-tryptophan biosynthesis; L-tryptophan from chorismate: step 3/5.</text>
</comment>
<comment type="similarity">
    <text evidence="1">Belongs to the TrpF family.</text>
</comment>
<proteinExistence type="inferred from homology"/>
<protein>
    <recommendedName>
        <fullName>N-(5'-phosphoribosyl)anthranilate isomerase</fullName>
        <shortName>PRAI</shortName>
        <ecNumber>5.3.1.24</ecNumber>
    </recommendedName>
</protein>
<organism>
    <name type="scientific">Saccharomyces kudriavzevii (strain ATCC MYA-4449 / AS 2.2408 / CBS 8840 / NBRC 1802 / NCYC 2889)</name>
    <name type="common">Yeast</name>
    <dbReference type="NCBI Taxonomy" id="226230"/>
    <lineage>
        <taxon>Eukaryota</taxon>
        <taxon>Fungi</taxon>
        <taxon>Dikarya</taxon>
        <taxon>Ascomycota</taxon>
        <taxon>Saccharomycotina</taxon>
        <taxon>Saccharomycetes</taxon>
        <taxon>Saccharomycetales</taxon>
        <taxon>Saccharomycetaceae</taxon>
        <taxon>Saccharomyces</taxon>
    </lineage>
</organism>
<dbReference type="EC" id="5.3.1.24"/>
<dbReference type="EMBL" id="AY740027">
    <property type="protein sequence ID" value="AAU43745.1"/>
    <property type="molecule type" value="Genomic_DNA"/>
</dbReference>
<dbReference type="EMBL" id="AACI03000993">
    <property type="protein sequence ID" value="EJT43161.1"/>
    <property type="molecule type" value="Genomic_DNA"/>
</dbReference>
<dbReference type="SMR" id="Q5XQP9"/>
<dbReference type="STRING" id="226230.Q5XQP9"/>
<dbReference type="HOGENOM" id="CLU_076364_1_0_1"/>
<dbReference type="OrthoDB" id="524799at2759"/>
<dbReference type="UniPathway" id="UPA00035">
    <property type="reaction ID" value="UER00042"/>
</dbReference>
<dbReference type="Proteomes" id="UP000002753">
    <property type="component" value="Unassembled WGS sequence"/>
</dbReference>
<dbReference type="GO" id="GO:0004640">
    <property type="term" value="F:phosphoribosylanthranilate isomerase activity"/>
    <property type="evidence" value="ECO:0007669"/>
    <property type="project" value="UniProtKB-EC"/>
</dbReference>
<dbReference type="GO" id="GO:0000162">
    <property type="term" value="P:L-tryptophan biosynthetic process"/>
    <property type="evidence" value="ECO:0007669"/>
    <property type="project" value="UniProtKB-UniPathway"/>
</dbReference>
<dbReference type="CDD" id="cd00405">
    <property type="entry name" value="PRAI"/>
    <property type="match status" value="1"/>
</dbReference>
<dbReference type="FunFam" id="3.20.20.70:FF:000199">
    <property type="entry name" value="Phosphoribosylanthranilate isomerase"/>
    <property type="match status" value="1"/>
</dbReference>
<dbReference type="Gene3D" id="3.20.20.70">
    <property type="entry name" value="Aldolase class I"/>
    <property type="match status" value="1"/>
</dbReference>
<dbReference type="HAMAP" id="MF_00135">
    <property type="entry name" value="PRAI"/>
    <property type="match status" value="1"/>
</dbReference>
<dbReference type="InterPro" id="IPR013785">
    <property type="entry name" value="Aldolase_TIM"/>
</dbReference>
<dbReference type="InterPro" id="IPR001240">
    <property type="entry name" value="PRAI_dom"/>
</dbReference>
<dbReference type="InterPro" id="IPR011060">
    <property type="entry name" value="RibuloseP-bd_barrel"/>
</dbReference>
<dbReference type="InterPro" id="IPR044643">
    <property type="entry name" value="TrpF_fam"/>
</dbReference>
<dbReference type="PANTHER" id="PTHR42894">
    <property type="entry name" value="N-(5'-PHOSPHORIBOSYL)ANTHRANILATE ISOMERASE"/>
    <property type="match status" value="1"/>
</dbReference>
<dbReference type="PANTHER" id="PTHR42894:SF1">
    <property type="entry name" value="N-(5'-PHOSPHORIBOSYL)ANTHRANILATE ISOMERASE"/>
    <property type="match status" value="1"/>
</dbReference>
<dbReference type="Pfam" id="PF00697">
    <property type="entry name" value="PRAI"/>
    <property type="match status" value="1"/>
</dbReference>
<dbReference type="SUPFAM" id="SSF51366">
    <property type="entry name" value="Ribulose-phoshate binding barrel"/>
    <property type="match status" value="1"/>
</dbReference>
<name>TRPF_SACK1</name>
<keyword id="KW-0028">Amino-acid biosynthesis</keyword>
<keyword id="KW-0057">Aromatic amino acid biosynthesis</keyword>
<keyword id="KW-0413">Isomerase</keyword>
<keyword id="KW-1185">Reference proteome</keyword>
<keyword id="KW-0822">Tryptophan biosynthesis</keyword>
<feature type="chain" id="PRO_0000154336" description="N-(5'-phosphoribosyl)anthranilate isomerase">
    <location>
        <begin position="1"/>
        <end position="226"/>
    </location>
</feature>
<reference key="1">
    <citation type="journal article" date="2004" name="Proc. Natl. Acad. Sci. U.S.A.">
        <title>Parallel inactivation of multiple GAL pathway genes and ecological diversification in yeasts.</title>
        <authorList>
            <person name="Hittinger C.T."/>
            <person name="Rokas A."/>
            <person name="Carroll S.B."/>
        </authorList>
    </citation>
    <scope>NUCLEOTIDE SEQUENCE [GENOMIC DNA]</scope>
    <source>
        <strain>ATCC MYA-4449 / AS 2.2408 / CBS 8840 / NBRC 1802 / NCYC 2889</strain>
    </source>
</reference>
<reference key="2">
    <citation type="journal article" date="2003" name="Science">
        <title>Finding functional features in Saccharomyces genomes by phylogenetic footprinting.</title>
        <authorList>
            <person name="Cliften P.F."/>
            <person name="Sudarsanam P."/>
            <person name="Desikan A."/>
            <person name="Fulton L."/>
            <person name="Fulton B."/>
            <person name="Majors J."/>
            <person name="Waterston R."/>
            <person name="Cohen B.A."/>
            <person name="Johnston M."/>
        </authorList>
    </citation>
    <scope>NUCLEOTIDE SEQUENCE [LARGE SCALE GENOMIC DNA]</scope>
    <source>
        <strain>ATCC MYA-4449 / AS 2.2408 / CBS 8840 / NBRC 1802 / NCYC 2889</strain>
    </source>
</reference>
<reference key="3">
    <citation type="journal article" date="2011" name="G3 (Bethesda)">
        <title>The awesome power of yeast evolutionary genetics: New genome sequences and strain resources for the Saccharomyces sensu stricto genus.</title>
        <authorList>
            <person name="Scannell D.R."/>
            <person name="Zill O.A."/>
            <person name="Rokas A."/>
            <person name="Payen C."/>
            <person name="Dunham M.J."/>
            <person name="Eisen M.B."/>
            <person name="Rine J."/>
            <person name="Johnston M."/>
            <person name="Hittinger C.T."/>
        </authorList>
    </citation>
    <scope>GENOME REANNOTATION</scope>
    <source>
        <strain>ATCC MYA-4449 / AS 2.2408 / CBS 8840 / NBRC 1802 / NCYC 2889</strain>
    </source>
</reference>
<gene>
    <name type="primary">TRP1</name>
</gene>
<accession>Q5XQP9</accession>
<accession>J5RY70</accession>
<sequence length="226" mass="24791">MSFVNIRSSRGPVVKVCGLQSLKAAQCALDSDADLLGIICVPGRERTVDPVVAMEISALVRACRTSMSTPKYLVGVFRNQSKEDVLRIANDYGIDIVQLHGDEPWQEYQKFLGLPVIKRLVFPRDCDILLSTPSEKTHLFMPLFDSEAGGTGELLDWNSISDWFAEQGNPECLQFMLAGGLTPENVSDALQLHGVIGVDVSGGVETNGMKDMDKITNFVRNAKKES</sequence>
<evidence type="ECO:0000305" key="1"/>